<keyword id="KW-0479">Metal-binding</keyword>
<keyword id="KW-0539">Nucleus</keyword>
<keyword id="KW-1185">Reference proteome</keyword>
<keyword id="KW-0804">Transcription</keyword>
<keyword id="KW-0805">Transcription regulation</keyword>
<keyword id="KW-0862">Zinc</keyword>
<keyword id="KW-0863">Zinc-finger</keyword>
<evidence type="ECO:0000250" key="1"/>
<evidence type="ECO:0000255" key="2">
    <source>
        <dbReference type="PROSITE-ProRule" id="PRU00228"/>
    </source>
</evidence>
<evidence type="ECO:0000255" key="3">
    <source>
        <dbReference type="PROSITE-ProRule" id="PRU00624"/>
    </source>
</evidence>
<evidence type="ECO:0000256" key="4">
    <source>
        <dbReference type="SAM" id="MobiDB-lite"/>
    </source>
</evidence>
<evidence type="ECO:0000305" key="5"/>
<proteinExistence type="evidence at transcript level"/>
<dbReference type="EMBL" id="BC055562">
    <property type="protein sequence ID" value="AAH55562.1"/>
    <property type="status" value="ALT_INIT"/>
    <property type="molecule type" value="mRNA"/>
</dbReference>
<dbReference type="EMBL" id="BC095241">
    <property type="protein sequence ID" value="AAH95241.1"/>
    <property type="molecule type" value="mRNA"/>
</dbReference>
<dbReference type="EMBL" id="BC165604">
    <property type="protein sequence ID" value="AAI65604.1"/>
    <property type="molecule type" value="mRNA"/>
</dbReference>
<dbReference type="RefSeq" id="NP_001019614.1">
    <property type="nucleotide sequence ID" value="NM_001024443.1"/>
</dbReference>
<dbReference type="SMR" id="Q503N9"/>
<dbReference type="FunCoup" id="Q503N9">
    <property type="interactions" value="1307"/>
</dbReference>
<dbReference type="STRING" id="7955.ENSDARP00000012853"/>
<dbReference type="PaxDb" id="7955-ENSDARP00000012853"/>
<dbReference type="GeneID" id="554156"/>
<dbReference type="KEGG" id="dre:554156"/>
<dbReference type="AGR" id="ZFIN:ZDB-GENE-050522-557"/>
<dbReference type="CTD" id="93624"/>
<dbReference type="ZFIN" id="ZDB-GENE-050522-557">
    <property type="gene designation" value="tada2b"/>
</dbReference>
<dbReference type="eggNOG" id="KOG0457">
    <property type="taxonomic scope" value="Eukaryota"/>
</dbReference>
<dbReference type="InParanoid" id="Q503N9"/>
<dbReference type="OrthoDB" id="270417at2759"/>
<dbReference type="PhylomeDB" id="Q503N9"/>
<dbReference type="Reactome" id="R-DRE-5689880">
    <property type="pathway name" value="Ub-specific processing proteases"/>
</dbReference>
<dbReference type="PRO" id="PR:Q503N9"/>
<dbReference type="Proteomes" id="UP000000437">
    <property type="component" value="Chromosome 7"/>
</dbReference>
<dbReference type="GO" id="GO:0005634">
    <property type="term" value="C:nucleus"/>
    <property type="evidence" value="ECO:0000318"/>
    <property type="project" value="GO_Central"/>
</dbReference>
<dbReference type="GO" id="GO:0070461">
    <property type="term" value="C:SAGA-type complex"/>
    <property type="evidence" value="ECO:0000318"/>
    <property type="project" value="GO_Central"/>
</dbReference>
<dbReference type="GO" id="GO:0003682">
    <property type="term" value="F:chromatin binding"/>
    <property type="evidence" value="ECO:0000318"/>
    <property type="project" value="GO_Central"/>
</dbReference>
<dbReference type="GO" id="GO:0003713">
    <property type="term" value="F:transcription coactivator activity"/>
    <property type="evidence" value="ECO:0000318"/>
    <property type="project" value="GO_Central"/>
</dbReference>
<dbReference type="GO" id="GO:0008270">
    <property type="term" value="F:zinc ion binding"/>
    <property type="evidence" value="ECO:0007669"/>
    <property type="project" value="UniProtKB-KW"/>
</dbReference>
<dbReference type="GO" id="GO:0006338">
    <property type="term" value="P:chromatin remodeling"/>
    <property type="evidence" value="ECO:0000318"/>
    <property type="project" value="GO_Central"/>
</dbReference>
<dbReference type="GO" id="GO:0006357">
    <property type="term" value="P:regulation of transcription by RNA polymerase II"/>
    <property type="evidence" value="ECO:0000318"/>
    <property type="project" value="GO_Central"/>
</dbReference>
<dbReference type="CDD" id="cd00167">
    <property type="entry name" value="SANT"/>
    <property type="match status" value="1"/>
</dbReference>
<dbReference type="CDD" id="cd02335">
    <property type="entry name" value="ZZ_ADA2"/>
    <property type="match status" value="1"/>
</dbReference>
<dbReference type="FunFam" id="1.10.10.10:FF:000185">
    <property type="entry name" value="Transcriptional adapter"/>
    <property type="match status" value="1"/>
</dbReference>
<dbReference type="FunFam" id="1.10.10.60:FF:000170">
    <property type="entry name" value="Transcriptional adapter"/>
    <property type="match status" value="1"/>
</dbReference>
<dbReference type="FunFam" id="3.30.60.90:FF:000011">
    <property type="entry name" value="Transcriptional adapter"/>
    <property type="match status" value="1"/>
</dbReference>
<dbReference type="Gene3D" id="3.30.60.90">
    <property type="match status" value="1"/>
</dbReference>
<dbReference type="Gene3D" id="1.10.10.60">
    <property type="entry name" value="Homeodomain-like"/>
    <property type="match status" value="1"/>
</dbReference>
<dbReference type="Gene3D" id="1.10.10.10">
    <property type="entry name" value="Winged helix-like DNA-binding domain superfamily/Winged helix DNA-binding domain"/>
    <property type="match status" value="1"/>
</dbReference>
<dbReference type="InterPro" id="IPR041983">
    <property type="entry name" value="ADA2-like_ZZ"/>
</dbReference>
<dbReference type="InterPro" id="IPR016827">
    <property type="entry name" value="Ada2/TADA2"/>
</dbReference>
<dbReference type="InterPro" id="IPR056267">
    <property type="entry name" value="Ada2b_C"/>
</dbReference>
<dbReference type="InterPro" id="IPR009057">
    <property type="entry name" value="Homeodomain-like_sf"/>
</dbReference>
<dbReference type="InterPro" id="IPR001005">
    <property type="entry name" value="SANT/Myb"/>
</dbReference>
<dbReference type="InterPro" id="IPR017884">
    <property type="entry name" value="SANT_dom"/>
</dbReference>
<dbReference type="InterPro" id="IPR055141">
    <property type="entry name" value="TADA2A_B-like_dom"/>
</dbReference>
<dbReference type="InterPro" id="IPR036388">
    <property type="entry name" value="WH-like_DNA-bd_sf"/>
</dbReference>
<dbReference type="InterPro" id="IPR000433">
    <property type="entry name" value="Znf_ZZ"/>
</dbReference>
<dbReference type="InterPro" id="IPR043145">
    <property type="entry name" value="Znf_ZZ_sf"/>
</dbReference>
<dbReference type="PANTHER" id="PTHR12374:SF63">
    <property type="entry name" value="TRANSCRIPTIONAL ADAPTER 2-BETA"/>
    <property type="match status" value="1"/>
</dbReference>
<dbReference type="PANTHER" id="PTHR12374">
    <property type="entry name" value="TRANSCRIPTIONAL ADAPTOR 2 ADA2 -RELATED"/>
    <property type="match status" value="1"/>
</dbReference>
<dbReference type="Pfam" id="PF00249">
    <property type="entry name" value="Myb_DNA-binding"/>
    <property type="match status" value="1"/>
</dbReference>
<dbReference type="Pfam" id="PF22941">
    <property type="entry name" value="TADA2A-like_3rd"/>
    <property type="match status" value="1"/>
</dbReference>
<dbReference type="Pfam" id="PF24533">
    <property type="entry name" value="Tri-helical_Ada2b_C"/>
    <property type="match status" value="1"/>
</dbReference>
<dbReference type="Pfam" id="PF25299">
    <property type="entry name" value="ZZ_ADA2"/>
    <property type="match status" value="1"/>
</dbReference>
<dbReference type="PIRSF" id="PIRSF025024">
    <property type="entry name" value="Transcriptional_adaptor_2"/>
    <property type="match status" value="1"/>
</dbReference>
<dbReference type="SMART" id="SM00717">
    <property type="entry name" value="SANT"/>
    <property type="match status" value="1"/>
</dbReference>
<dbReference type="SMART" id="SM00291">
    <property type="entry name" value="ZnF_ZZ"/>
    <property type="match status" value="1"/>
</dbReference>
<dbReference type="SUPFAM" id="SSF46689">
    <property type="entry name" value="Homeodomain-like"/>
    <property type="match status" value="2"/>
</dbReference>
<dbReference type="SUPFAM" id="SSF57850">
    <property type="entry name" value="RING/U-box"/>
    <property type="match status" value="1"/>
</dbReference>
<dbReference type="PROSITE" id="PS51293">
    <property type="entry name" value="SANT"/>
    <property type="match status" value="1"/>
</dbReference>
<dbReference type="PROSITE" id="PS01357">
    <property type="entry name" value="ZF_ZZ_1"/>
    <property type="match status" value="1"/>
</dbReference>
<dbReference type="PROSITE" id="PS50135">
    <property type="entry name" value="ZF_ZZ_2"/>
    <property type="match status" value="1"/>
</dbReference>
<accession>Q503N9</accession>
<accession>B5DDS4</accession>
<accession>Q7SXK2</accession>
<organism>
    <name type="scientific">Danio rerio</name>
    <name type="common">Zebrafish</name>
    <name type="synonym">Brachydanio rerio</name>
    <dbReference type="NCBI Taxonomy" id="7955"/>
    <lineage>
        <taxon>Eukaryota</taxon>
        <taxon>Metazoa</taxon>
        <taxon>Chordata</taxon>
        <taxon>Craniata</taxon>
        <taxon>Vertebrata</taxon>
        <taxon>Euteleostomi</taxon>
        <taxon>Actinopterygii</taxon>
        <taxon>Neopterygii</taxon>
        <taxon>Teleostei</taxon>
        <taxon>Ostariophysi</taxon>
        <taxon>Cypriniformes</taxon>
        <taxon>Danionidae</taxon>
        <taxon>Danioninae</taxon>
        <taxon>Danio</taxon>
    </lineage>
</organism>
<comment type="function">
    <text evidence="1">Transcriptional coactivator.</text>
</comment>
<comment type="subcellular location">
    <subcellularLocation>
        <location evidence="5">Nucleus</location>
    </subcellularLocation>
</comment>
<comment type="sequence caution" evidence="5">
    <conflict type="erroneous initiation">
        <sequence resource="EMBL-CDS" id="AAH55562"/>
    </conflict>
</comment>
<name>TAD2B_DANRE</name>
<sequence>MADLGKKYCVNCLADVTNLRIRCAECQDIELCPECFSAGAEIGNHRRWHGYQQVDGGRFSLWGPEAEGGWTSREEQSLLDAIEQYGFGNWEDMAAHVGASRTPQEVMDHYVSMYIHGNLGKACIPDSIPNRVTDHTCPSGGPLSPSLTTPLPPLDITVVEQQQLGYMPLRDDYEIEYDQEAEKLISGLSVNYDDEDIEIEMKRAHVDMYVRKLRERQRRKNIARDYNLVPAFLGRDKKDKERERAGGTVGVGGPGGAVGSGSGATVVPAGPLGSSTAATPKRKITKEEKGQRTKLRALCQFMPQREFEEFFDNMHKERMLRAKVRELQRYRRNGITRLDESAEYEAARHKREKRKENKSIAGSKRGSSGGGGGTAGLGGGVGAGGGLGGGGGVSTIKEEGKDSEFSAIENLSGFELLSDREKVLCNSMNLSPMRYLTVKTIIIKDHLQKRQGIPSKSRLPSYLDKVLKKRILNFLSESGWISRDAS</sequence>
<reference key="1">
    <citation type="submission" date="2008-04" db="EMBL/GenBank/DDBJ databases">
        <authorList>
            <consortium name="NIH - Zebrafish Gene Collection (ZGC) project"/>
        </authorList>
    </citation>
    <scope>NUCLEOTIDE SEQUENCE [LARGE SCALE MRNA]</scope>
    <source>
        <strain>AB</strain>
    </source>
</reference>
<feature type="chain" id="PRO_0000313713" description="Transcriptional adapter 2-beta">
    <location>
        <begin position="1"/>
        <end position="486"/>
    </location>
</feature>
<feature type="domain" description="SANT" evidence="3">
    <location>
        <begin position="65"/>
        <end position="118"/>
    </location>
</feature>
<feature type="zinc finger region" description="ZZ-type" evidence="2">
    <location>
        <begin position="4"/>
        <end position="59"/>
    </location>
</feature>
<feature type="region of interest" description="Disordered" evidence="4">
    <location>
        <begin position="237"/>
        <end position="291"/>
    </location>
</feature>
<feature type="region of interest" description="Disordered" evidence="4">
    <location>
        <begin position="343"/>
        <end position="377"/>
    </location>
</feature>
<feature type="compositionally biased region" description="Gly residues" evidence="4">
    <location>
        <begin position="247"/>
        <end position="262"/>
    </location>
</feature>
<feature type="compositionally biased region" description="Gly residues" evidence="4">
    <location>
        <begin position="367"/>
        <end position="377"/>
    </location>
</feature>
<feature type="binding site" evidence="2">
    <location>
        <position position="9"/>
    </location>
    <ligand>
        <name>Zn(2+)</name>
        <dbReference type="ChEBI" id="CHEBI:29105"/>
        <label>1</label>
    </ligand>
</feature>
<feature type="binding site" evidence="2">
    <location>
        <position position="12"/>
    </location>
    <ligand>
        <name>Zn(2+)</name>
        <dbReference type="ChEBI" id="CHEBI:29105"/>
        <label>1</label>
    </ligand>
</feature>
<feature type="binding site" evidence="2">
    <location>
        <position position="23"/>
    </location>
    <ligand>
        <name>Zn(2+)</name>
        <dbReference type="ChEBI" id="CHEBI:29105"/>
        <label>2</label>
    </ligand>
</feature>
<feature type="binding site" evidence="2">
    <location>
        <position position="26"/>
    </location>
    <ligand>
        <name>Zn(2+)</name>
        <dbReference type="ChEBI" id="CHEBI:29105"/>
        <label>2</label>
    </ligand>
</feature>
<feature type="binding site" evidence="2">
    <location>
        <position position="32"/>
    </location>
    <ligand>
        <name>Zn(2+)</name>
        <dbReference type="ChEBI" id="CHEBI:29105"/>
        <label>1</label>
    </ligand>
</feature>
<feature type="binding site" evidence="2">
    <location>
        <position position="35"/>
    </location>
    <ligand>
        <name>Zn(2+)</name>
        <dbReference type="ChEBI" id="CHEBI:29105"/>
        <label>1</label>
    </ligand>
</feature>
<feature type="binding site" evidence="2">
    <location>
        <position position="45"/>
    </location>
    <ligand>
        <name>Zn(2+)</name>
        <dbReference type="ChEBI" id="CHEBI:29105"/>
        <label>2</label>
    </ligand>
</feature>
<feature type="binding site" evidence="2">
    <location>
        <position position="49"/>
    </location>
    <ligand>
        <name>Zn(2+)</name>
        <dbReference type="ChEBI" id="CHEBI:29105"/>
        <label>2</label>
    </ligand>
</feature>
<feature type="sequence conflict" description="In Ref. 1; AAH55562." evidence="5" ref="1">
    <original>G</original>
    <variation>E</variation>
    <location>
        <position position="290"/>
    </location>
</feature>
<gene>
    <name type="primary">tada2b</name>
    <name type="ORF">zgc:110397</name>
</gene>
<protein>
    <recommendedName>
        <fullName>Transcriptional adapter 2-beta</fullName>
    </recommendedName>
</protein>